<comment type="function">
    <text evidence="1">Functions as a sorting receptor in the Golgi compartment required for the intracellular sorting and delivery of soluble vacuolar proteins, like carboxypeptidase Y (CPY) and proteinase A. Executes multiple rounds of sorting by cycling between the late Golgi and a prevacuolar endosome-like compartment (By similarity).</text>
</comment>
<comment type="subcellular location">
    <subcellularLocation>
        <location evidence="1">Golgi apparatus</location>
        <location evidence="1">trans-Golgi network membrane</location>
        <topology evidence="1">Single-pass type I membrane protein</topology>
    </subcellularLocation>
    <subcellularLocation>
        <location evidence="1">Prevacuolar compartment membrane</location>
        <topology evidence="1">Single-pass type I membrane protein</topology>
    </subcellularLocation>
    <text evidence="1">Cycles between the Golgi apparatus and the prevacuolar compartment.</text>
</comment>
<comment type="similarity">
    <text evidence="4">Belongs to the VPS10-related sortilin family.</text>
</comment>
<organism>
    <name type="scientific">Zygosaccharomyces rouxii (strain ATCC 2623 / CBS 732 / NBRC 1130 / NCYC 568 / NRRL Y-229)</name>
    <dbReference type="NCBI Taxonomy" id="559307"/>
    <lineage>
        <taxon>Eukaryota</taxon>
        <taxon>Fungi</taxon>
        <taxon>Dikarya</taxon>
        <taxon>Ascomycota</taxon>
        <taxon>Saccharomycotina</taxon>
        <taxon>Saccharomycetes</taxon>
        <taxon>Saccharomycetales</taxon>
        <taxon>Saccharomycetaceae</taxon>
        <taxon>Zygosaccharomyces</taxon>
    </lineage>
</organism>
<accession>C5DU19</accession>
<dbReference type="EMBL" id="CU928175">
    <property type="protein sequence ID" value="CAR27280.1"/>
    <property type="molecule type" value="Genomic_DNA"/>
</dbReference>
<dbReference type="RefSeq" id="XP_002496213.1">
    <property type="nucleotide sequence ID" value="XM_002496168.1"/>
</dbReference>
<dbReference type="SMR" id="C5DU19"/>
<dbReference type="FunCoup" id="C5DU19">
    <property type="interactions" value="250"/>
</dbReference>
<dbReference type="GlyCosmos" id="C5DU19">
    <property type="glycosylation" value="2 sites, No reported glycans"/>
</dbReference>
<dbReference type="GeneID" id="8203437"/>
<dbReference type="KEGG" id="zro:ZYRO0C13178g"/>
<dbReference type="HOGENOM" id="CLU_000700_0_0_1"/>
<dbReference type="InParanoid" id="C5DU19"/>
<dbReference type="Proteomes" id="UP000008536">
    <property type="component" value="Chromosome C"/>
</dbReference>
<dbReference type="GO" id="GO:0005829">
    <property type="term" value="C:cytosol"/>
    <property type="evidence" value="ECO:0007669"/>
    <property type="project" value="GOC"/>
</dbReference>
<dbReference type="GO" id="GO:0005794">
    <property type="term" value="C:Golgi apparatus"/>
    <property type="evidence" value="ECO:0007669"/>
    <property type="project" value="UniProtKB-SubCell"/>
</dbReference>
<dbReference type="GO" id="GO:0016020">
    <property type="term" value="C:membrane"/>
    <property type="evidence" value="ECO:0007669"/>
    <property type="project" value="UniProtKB-KW"/>
</dbReference>
<dbReference type="GO" id="GO:0006895">
    <property type="term" value="P:Golgi to endosome transport"/>
    <property type="evidence" value="ECO:0007669"/>
    <property type="project" value="TreeGrafter"/>
</dbReference>
<dbReference type="GO" id="GO:0006896">
    <property type="term" value="P:Golgi to vacuole transport"/>
    <property type="evidence" value="ECO:0007669"/>
    <property type="project" value="TreeGrafter"/>
</dbReference>
<dbReference type="GO" id="GO:0006623">
    <property type="term" value="P:protein targeting to vacuole"/>
    <property type="evidence" value="ECO:0007669"/>
    <property type="project" value="TreeGrafter"/>
</dbReference>
<dbReference type="CDD" id="cd15482">
    <property type="entry name" value="Sialidase_non-viral"/>
    <property type="match status" value="2"/>
</dbReference>
<dbReference type="FunFam" id="3.30.60.270:FF:000005">
    <property type="entry name" value="Sortilin"/>
    <property type="match status" value="1"/>
</dbReference>
<dbReference type="Gene3D" id="2.120.10.10">
    <property type="match status" value="1"/>
</dbReference>
<dbReference type="Gene3D" id="3.30.60.270">
    <property type="match status" value="2"/>
</dbReference>
<dbReference type="Gene3D" id="2.130.10.10">
    <property type="entry name" value="YVTN repeat-like/Quinoprotein amine dehydrogenase"/>
    <property type="match status" value="2"/>
</dbReference>
<dbReference type="InterPro" id="IPR031777">
    <property type="entry name" value="Sortilin_C"/>
</dbReference>
<dbReference type="InterPro" id="IPR031778">
    <property type="entry name" value="Sortilin_N"/>
</dbReference>
<dbReference type="InterPro" id="IPR006581">
    <property type="entry name" value="VPS10"/>
</dbReference>
<dbReference type="InterPro" id="IPR050310">
    <property type="entry name" value="VPS10-sortilin"/>
</dbReference>
<dbReference type="InterPro" id="IPR015943">
    <property type="entry name" value="WD40/YVTN_repeat-like_dom_sf"/>
</dbReference>
<dbReference type="PANTHER" id="PTHR12106">
    <property type="entry name" value="SORTILIN RELATED"/>
    <property type="match status" value="1"/>
</dbReference>
<dbReference type="PANTHER" id="PTHR12106:SF27">
    <property type="entry name" value="SORTILIN-RELATED RECEPTOR"/>
    <property type="match status" value="1"/>
</dbReference>
<dbReference type="Pfam" id="PF15902">
    <property type="entry name" value="Sortilin-Vps10"/>
    <property type="match status" value="2"/>
</dbReference>
<dbReference type="Pfam" id="PF15901">
    <property type="entry name" value="Sortilin_C"/>
    <property type="match status" value="2"/>
</dbReference>
<dbReference type="SMART" id="SM00602">
    <property type="entry name" value="VPS10"/>
    <property type="match status" value="2"/>
</dbReference>
<dbReference type="SUPFAM" id="SSF110296">
    <property type="entry name" value="Oligoxyloglucan reducing end-specific cellobiohydrolase"/>
    <property type="match status" value="2"/>
</dbReference>
<gene>
    <name type="primary">VPS10</name>
    <name type="ordered locus">ZYRO0C13178g</name>
</gene>
<evidence type="ECO:0000250" key="1"/>
<evidence type="ECO:0000255" key="2"/>
<evidence type="ECO:0000256" key="3">
    <source>
        <dbReference type="SAM" id="MobiDB-lite"/>
    </source>
</evidence>
<evidence type="ECO:0000305" key="4"/>
<feature type="signal peptide" evidence="2">
    <location>
        <begin position="1"/>
        <end position="18"/>
    </location>
</feature>
<feature type="chain" id="PRO_0000407548" description="Vacuolar protein sorting/targeting protein 10">
    <location>
        <begin position="19"/>
        <end position="1586"/>
    </location>
</feature>
<feature type="topological domain" description="Lumenal" evidence="2">
    <location>
        <begin position="20"/>
        <end position="1374"/>
    </location>
</feature>
<feature type="transmembrane region" description="Helical" evidence="2">
    <location>
        <begin position="1375"/>
        <end position="1395"/>
    </location>
</feature>
<feature type="topological domain" description="Cytoplasmic" evidence="2">
    <location>
        <begin position="1396"/>
        <end position="1586"/>
    </location>
</feature>
<feature type="repeat" description="BNR 1">
    <location>
        <begin position="54"/>
        <end position="64"/>
    </location>
</feature>
<feature type="repeat" description="BNR 2">
    <location>
        <begin position="401"/>
        <end position="410"/>
    </location>
</feature>
<feature type="repeat" description="BNR 3">
    <location>
        <begin position="473"/>
        <end position="483"/>
    </location>
</feature>
<feature type="repeat" description="BNR 4">
    <location>
        <begin position="519"/>
        <end position="529"/>
    </location>
</feature>
<feature type="repeat" description="BNR 5">
    <location>
        <begin position="841"/>
        <end position="852"/>
    </location>
</feature>
<feature type="repeat" description="BNR 6">
    <location>
        <begin position="1123"/>
        <end position="1133"/>
    </location>
</feature>
<feature type="repeat" description="BNR 7">
    <location>
        <begin position="1164"/>
        <end position="1174"/>
    </location>
</feature>
<feature type="region of interest" description="Disordered" evidence="3">
    <location>
        <begin position="1511"/>
        <end position="1586"/>
    </location>
</feature>
<feature type="compositionally biased region" description="Low complexity" evidence="3">
    <location>
        <begin position="1546"/>
        <end position="1565"/>
    </location>
</feature>
<feature type="glycosylation site" description="N-linked (GlcNAc...) asparagine" evidence="2">
    <location>
        <position position="990"/>
    </location>
</feature>
<feature type="glycosylation site" description="N-linked (GlcNAc...) asparagine" evidence="2">
    <location>
        <position position="1284"/>
    </location>
</feature>
<keyword id="KW-0325">Glycoprotein</keyword>
<keyword id="KW-0333">Golgi apparatus</keyword>
<keyword id="KW-0472">Membrane</keyword>
<keyword id="KW-0653">Protein transport</keyword>
<keyword id="KW-0675">Receptor</keyword>
<keyword id="KW-1185">Reference proteome</keyword>
<keyword id="KW-0677">Repeat</keyword>
<keyword id="KW-0732">Signal</keyword>
<keyword id="KW-0812">Transmembrane</keyword>
<keyword id="KW-1133">Transmembrane helix</keyword>
<keyword id="KW-0813">Transport</keyword>
<reference key="1">
    <citation type="journal article" date="2009" name="Genome Res.">
        <title>Comparative genomics of protoploid Saccharomycetaceae.</title>
        <authorList>
            <consortium name="The Genolevures Consortium"/>
            <person name="Souciet J.-L."/>
            <person name="Dujon B."/>
            <person name="Gaillardin C."/>
            <person name="Johnston M."/>
            <person name="Baret P.V."/>
            <person name="Cliften P."/>
            <person name="Sherman D.J."/>
            <person name="Weissenbach J."/>
            <person name="Westhof E."/>
            <person name="Wincker P."/>
            <person name="Jubin C."/>
            <person name="Poulain J."/>
            <person name="Barbe V."/>
            <person name="Segurens B."/>
            <person name="Artiguenave F."/>
            <person name="Anthouard V."/>
            <person name="Vacherie B."/>
            <person name="Val M.-E."/>
            <person name="Fulton R.S."/>
            <person name="Minx P."/>
            <person name="Wilson R."/>
            <person name="Durrens P."/>
            <person name="Jean G."/>
            <person name="Marck C."/>
            <person name="Martin T."/>
            <person name="Nikolski M."/>
            <person name="Rolland T."/>
            <person name="Seret M.-L."/>
            <person name="Casaregola S."/>
            <person name="Despons L."/>
            <person name="Fairhead C."/>
            <person name="Fischer G."/>
            <person name="Lafontaine I."/>
            <person name="Leh V."/>
            <person name="Lemaire M."/>
            <person name="de Montigny J."/>
            <person name="Neuveglise C."/>
            <person name="Thierry A."/>
            <person name="Blanc-Lenfle I."/>
            <person name="Bleykasten C."/>
            <person name="Diffels J."/>
            <person name="Fritsch E."/>
            <person name="Frangeul L."/>
            <person name="Goeffon A."/>
            <person name="Jauniaux N."/>
            <person name="Kachouri-Lafond R."/>
            <person name="Payen C."/>
            <person name="Potier S."/>
            <person name="Pribylova L."/>
            <person name="Ozanne C."/>
            <person name="Richard G.-F."/>
            <person name="Sacerdot C."/>
            <person name="Straub M.-L."/>
            <person name="Talla E."/>
        </authorList>
    </citation>
    <scope>NUCLEOTIDE SEQUENCE [LARGE SCALE GENOMIC DNA]</scope>
    <source>
        <strain>ATCC 2623 / CBS 732 / BCRC 21506 / NBRC 1130 / NCYC 568 / NRRL Y-229</strain>
    </source>
</reference>
<proteinExistence type="inferred from homology"/>
<protein>
    <recommendedName>
        <fullName>Vacuolar protein sorting/targeting protein 10</fullName>
    </recommendedName>
    <alternativeName>
        <fullName>Carboxypeptidase Y receptor</fullName>
        <shortName>CPY receptor</shortName>
    </alternativeName>
    <alternativeName>
        <fullName>Sortilin VPS10</fullName>
    </alternativeName>
    <alternativeName>
        <fullName>Vacuolar carboxypeptidase sorting receptor VPS10</fullName>
    </alternativeName>
</protein>
<sequence>MLIRLLFCIWAFWFKVIAAEFQPKVTRTSDSTVFYVAAFDDSTTLLRVQENGMFISFDNGGTWQEPNGAPSGVMMVDIDEHHRHDRAVAQTKDGQFYLTEDQGKHWRSLASPIDSKEYLYCDLDTHPLRRDYFLVRCTKCPEMEMGSSQLIDLHKRDSFMPSCQEFSYVSNNGGKDFKKIESPKHEPSPDTEYLGVTCEFASKSVESTLPSSRDLIYCFDGKMDKWFDNDFTFQTSGVLFYTDDFGKSSKVVDQFKDLTVSNFEVLNSHILVYTLEDRFNRWSASNLWVSSDGFKFSKAFLPTILRDMDTYGTTEDGLGRIILPLYVESEDDNRASQILISDSSGLQFRVLELTPEDNMEFSILEASKTLKGTMWADLMSLVKGPRYSGHPSFDFHQVSKISFDYGSTWSNLKVVASPNHRKDLFTCDINDVDHCSLHKLFGDSLPTETAGILMTLGTVGDGSENSWENLMTFISRDGGKTWEVAFEYPCQFAFGDLGNVIVAMPFSPDEDSDPQSEFYYSLDQGKTWKEYQLEVPIMPTELISTTPDSSGLNFIISSFSLTRDNETPPGSFFYTIDFSDAFNGEVCGPKEFESWYLAGGECVNGAKYSYSRRKQNSQCLVRKLFEDLVLTEEICDECTDKDYECSFGFSRDSNGVCKPDFKPLSFSPECMKSGKDSAKVKPMTKLPGNKCRKELKIEPLEVPCTQGHTILLTENNFNSKIQMYQYFDTKQDETLIIDTARNGVYISHDSGQIVKRFDPGENIVEIVFNTYHNSYAYLFGESGKLYVTANRCQSFAIAELPHSRQLGLPLEFHAKDPNTFIYYGGKNCKDMFSPSCHPVAYITTDGGKSFTKLLDNAIHCEFAGSLFKHPVDENLIYCQVKEPQTRKRTLMSSTDLFRNDKKVVLEKIIGYMNTGEFIVAAVPYGENELRAYVTVDGAELAEAKFPQDLTATKQEAFTVLGSETGSVFFHLTTFDEPGYEYGALLKSNSNGTSFVRLQSAVNRNLFGMVDFEKVQALEGIILINVVDNFEKVGTKTEEKKLKSMITFNDGSDWSYIRAPPKDSDSNSYGCNTKQLEKCSLHLHGYTEREDVRDTSFSGSAFGMLIGIGNVGEYLLPEDQCSTFFSRDGGETWREIKKGAYQWEFGDHGGVIVLVPKNSLTDRIFYSIDMGETWSDYILQGAKVYIQDIVTVPGDSALRFLLIASSSSVTGGSTKTFTVDFSNVFERQCSLNPDRPDNEDFKFFSLGQSDSKCLFGHQERYLMKDNYDCFVGNAPLSEFREITKNCSCTRADFECDYNYVKARDGTCTLVEGLSPAGPSDICKKQPELIEYFQPTGYRKIPLSTCVGGLTLDGVLSPLPCPGKEKEFKELHGVKSAPYFFTFLVFFLVLLVIAWFVYDRGVRRNGGFARFGEIRLDGDDLIENNNTDKMVNSIVKSGFYAASAIFSSYQLLKRSMGRAVWKLSEKFGRRSGPTYSSLLHDQFLDEADDLLTGHDEDANDLGSFLAEQGNFEIEDEDNELPPLRAPFTDEPHMESTETAEPVEPVEPVEPVESAEPTETAEPSSSPPQENYNDEHHDNKDDEQDLGAQ</sequence>
<name>VPS10_ZYGRC</name>